<gene>
    <name evidence="12" type="primary">pix</name>
    <name evidence="12" type="synonym">ABCE1</name>
    <name evidence="12" type="ORF">CG5651</name>
</gene>
<accession>Q9VSS1</accession>
<reference evidence="13" key="1">
    <citation type="journal article" date="2000" name="Science">
        <title>The genome sequence of Drosophila melanogaster.</title>
        <authorList>
            <person name="Adams M.D."/>
            <person name="Celniker S.E."/>
            <person name="Holt R.A."/>
            <person name="Evans C.A."/>
            <person name="Gocayne J.D."/>
            <person name="Amanatides P.G."/>
            <person name="Scherer S.E."/>
            <person name="Li P.W."/>
            <person name="Hoskins R.A."/>
            <person name="Galle R.F."/>
            <person name="George R.A."/>
            <person name="Lewis S.E."/>
            <person name="Richards S."/>
            <person name="Ashburner M."/>
            <person name="Henderson S.N."/>
            <person name="Sutton G.G."/>
            <person name="Wortman J.R."/>
            <person name="Yandell M.D."/>
            <person name="Zhang Q."/>
            <person name="Chen L.X."/>
            <person name="Brandon R.C."/>
            <person name="Rogers Y.-H.C."/>
            <person name="Blazej R.G."/>
            <person name="Champe M."/>
            <person name="Pfeiffer B.D."/>
            <person name="Wan K.H."/>
            <person name="Doyle C."/>
            <person name="Baxter E.G."/>
            <person name="Helt G."/>
            <person name="Nelson C.R."/>
            <person name="Miklos G.L.G."/>
            <person name="Abril J.F."/>
            <person name="Agbayani A."/>
            <person name="An H.-J."/>
            <person name="Andrews-Pfannkoch C."/>
            <person name="Baldwin D."/>
            <person name="Ballew R.M."/>
            <person name="Basu A."/>
            <person name="Baxendale J."/>
            <person name="Bayraktaroglu L."/>
            <person name="Beasley E.M."/>
            <person name="Beeson K.Y."/>
            <person name="Benos P.V."/>
            <person name="Berman B.P."/>
            <person name="Bhandari D."/>
            <person name="Bolshakov S."/>
            <person name="Borkova D."/>
            <person name="Botchan M.R."/>
            <person name="Bouck J."/>
            <person name="Brokstein P."/>
            <person name="Brottier P."/>
            <person name="Burtis K.C."/>
            <person name="Busam D.A."/>
            <person name="Butler H."/>
            <person name="Cadieu E."/>
            <person name="Center A."/>
            <person name="Chandra I."/>
            <person name="Cherry J.M."/>
            <person name="Cawley S."/>
            <person name="Dahlke C."/>
            <person name="Davenport L.B."/>
            <person name="Davies P."/>
            <person name="de Pablos B."/>
            <person name="Delcher A."/>
            <person name="Deng Z."/>
            <person name="Mays A.D."/>
            <person name="Dew I."/>
            <person name="Dietz S.M."/>
            <person name="Dodson K."/>
            <person name="Doup L.E."/>
            <person name="Downes M."/>
            <person name="Dugan-Rocha S."/>
            <person name="Dunkov B.C."/>
            <person name="Dunn P."/>
            <person name="Durbin K.J."/>
            <person name="Evangelista C.C."/>
            <person name="Ferraz C."/>
            <person name="Ferriera S."/>
            <person name="Fleischmann W."/>
            <person name="Fosler C."/>
            <person name="Gabrielian A.E."/>
            <person name="Garg N.S."/>
            <person name="Gelbart W.M."/>
            <person name="Glasser K."/>
            <person name="Glodek A."/>
            <person name="Gong F."/>
            <person name="Gorrell J.H."/>
            <person name="Gu Z."/>
            <person name="Guan P."/>
            <person name="Harris M."/>
            <person name="Harris N.L."/>
            <person name="Harvey D.A."/>
            <person name="Heiman T.J."/>
            <person name="Hernandez J.R."/>
            <person name="Houck J."/>
            <person name="Hostin D."/>
            <person name="Houston K.A."/>
            <person name="Howland T.J."/>
            <person name="Wei M.-H."/>
            <person name="Ibegwam C."/>
            <person name="Jalali M."/>
            <person name="Kalush F."/>
            <person name="Karpen G.H."/>
            <person name="Ke Z."/>
            <person name="Kennison J.A."/>
            <person name="Ketchum K.A."/>
            <person name="Kimmel B.E."/>
            <person name="Kodira C.D."/>
            <person name="Kraft C.L."/>
            <person name="Kravitz S."/>
            <person name="Kulp D."/>
            <person name="Lai Z."/>
            <person name="Lasko P."/>
            <person name="Lei Y."/>
            <person name="Levitsky A.A."/>
            <person name="Li J.H."/>
            <person name="Li Z."/>
            <person name="Liang Y."/>
            <person name="Lin X."/>
            <person name="Liu X."/>
            <person name="Mattei B."/>
            <person name="McIntosh T.C."/>
            <person name="McLeod M.P."/>
            <person name="McPherson D."/>
            <person name="Merkulov G."/>
            <person name="Milshina N.V."/>
            <person name="Mobarry C."/>
            <person name="Morris J."/>
            <person name="Moshrefi A."/>
            <person name="Mount S.M."/>
            <person name="Moy M."/>
            <person name="Murphy B."/>
            <person name="Murphy L."/>
            <person name="Muzny D.M."/>
            <person name="Nelson D.L."/>
            <person name="Nelson D.R."/>
            <person name="Nelson K.A."/>
            <person name="Nixon K."/>
            <person name="Nusskern D.R."/>
            <person name="Pacleb J.M."/>
            <person name="Palazzolo M."/>
            <person name="Pittman G.S."/>
            <person name="Pan S."/>
            <person name="Pollard J."/>
            <person name="Puri V."/>
            <person name="Reese M.G."/>
            <person name="Reinert K."/>
            <person name="Remington K."/>
            <person name="Saunders R.D.C."/>
            <person name="Scheeler F."/>
            <person name="Shen H."/>
            <person name="Shue B.C."/>
            <person name="Siden-Kiamos I."/>
            <person name="Simpson M."/>
            <person name="Skupski M.P."/>
            <person name="Smith T.J."/>
            <person name="Spier E."/>
            <person name="Spradling A.C."/>
            <person name="Stapleton M."/>
            <person name="Strong R."/>
            <person name="Sun E."/>
            <person name="Svirskas R."/>
            <person name="Tector C."/>
            <person name="Turner R."/>
            <person name="Venter E."/>
            <person name="Wang A.H."/>
            <person name="Wang X."/>
            <person name="Wang Z.-Y."/>
            <person name="Wassarman D.A."/>
            <person name="Weinstock G.M."/>
            <person name="Weissenbach J."/>
            <person name="Williams S.M."/>
            <person name="Woodage T."/>
            <person name="Worley K.C."/>
            <person name="Wu D."/>
            <person name="Yang S."/>
            <person name="Yao Q.A."/>
            <person name="Ye J."/>
            <person name="Yeh R.-F."/>
            <person name="Zaveri J.S."/>
            <person name="Zhan M."/>
            <person name="Zhang G."/>
            <person name="Zhao Q."/>
            <person name="Zheng L."/>
            <person name="Zheng X.H."/>
            <person name="Zhong F.N."/>
            <person name="Zhong W."/>
            <person name="Zhou X."/>
            <person name="Zhu S.C."/>
            <person name="Zhu X."/>
            <person name="Smith H.O."/>
            <person name="Gibbs R.A."/>
            <person name="Myers E.W."/>
            <person name="Rubin G.M."/>
            <person name="Venter J.C."/>
        </authorList>
    </citation>
    <scope>NUCLEOTIDE SEQUENCE [LARGE SCALE GENOMIC DNA]</scope>
    <source>
        <strain>Berkeley</strain>
    </source>
</reference>
<reference evidence="13" key="2">
    <citation type="journal article" date="2002" name="Genome Biol.">
        <title>Annotation of the Drosophila melanogaster euchromatic genome: a systematic review.</title>
        <authorList>
            <person name="Misra S."/>
            <person name="Crosby M.A."/>
            <person name="Mungall C.J."/>
            <person name="Matthews B.B."/>
            <person name="Campbell K.S."/>
            <person name="Hradecky P."/>
            <person name="Huang Y."/>
            <person name="Kaminker J.S."/>
            <person name="Millburn G.H."/>
            <person name="Prochnik S.E."/>
            <person name="Smith C.D."/>
            <person name="Tupy J.L."/>
            <person name="Whitfield E.J."/>
            <person name="Bayraktaroglu L."/>
            <person name="Berman B.P."/>
            <person name="Bettencourt B.R."/>
            <person name="Celniker S.E."/>
            <person name="de Grey A.D.N.J."/>
            <person name="Drysdale R.A."/>
            <person name="Harris N.L."/>
            <person name="Richter J."/>
            <person name="Russo S."/>
            <person name="Schroeder A.J."/>
            <person name="Shu S.Q."/>
            <person name="Stapleton M."/>
            <person name="Yamada C."/>
            <person name="Ashburner M."/>
            <person name="Gelbart W.M."/>
            <person name="Rubin G.M."/>
            <person name="Lewis S.E."/>
        </authorList>
    </citation>
    <scope>GENOME REANNOTATION</scope>
    <source>
        <strain>Berkeley</strain>
    </source>
</reference>
<reference evidence="11" key="3">
    <citation type="journal article" date="2002" name="Genome Biol.">
        <title>A Drosophila full-length cDNA resource.</title>
        <authorList>
            <person name="Stapleton M."/>
            <person name="Carlson J.W."/>
            <person name="Brokstein P."/>
            <person name="Yu C."/>
            <person name="Champe M."/>
            <person name="George R.A."/>
            <person name="Guarin H."/>
            <person name="Kronmiller B."/>
            <person name="Pacleb J.M."/>
            <person name="Park S."/>
            <person name="Wan K.H."/>
            <person name="Rubin G.M."/>
            <person name="Celniker S.E."/>
        </authorList>
    </citation>
    <scope>NUCLEOTIDE SEQUENCE [LARGE SCALE MRNA]</scope>
    <source>
        <strain evidence="11">Berkeley</strain>
        <tissue evidence="11">Embryo</tissue>
    </source>
</reference>
<reference evidence="10" key="4">
    <citation type="journal article" date="2005" name="Development">
        <title>Growth and cell survival are unevenly impaired in pixie mutant wing discs.</title>
        <authorList>
            <person name="Coelho C.M."/>
            <person name="Kolevski B."/>
            <person name="Bunn C."/>
            <person name="Walker C."/>
            <person name="Dahanukar A."/>
            <person name="Leevers S.J."/>
        </authorList>
    </citation>
    <scope>FUNCTION</scope>
    <scope>SUBCELLULAR LOCATION</scope>
    <scope>TISSUE SPECIFICITY</scope>
    <scope>MUTAGENESIS OF PRO-38; ALA-77; PRO-146 AND GLN-231</scope>
</reference>
<reference evidence="10" key="5">
    <citation type="journal article" date="2007" name="J. Biol. Chem.">
        <title>The essential Drosophila ATP-binding cassette domain protein, pixie, binds the 40 S ribosome in an ATP-dependent manner and is required for translation initiation.</title>
        <authorList>
            <person name="Andersen D.S."/>
            <person name="Leevers S.J."/>
        </authorList>
    </citation>
    <scope>FUNCTION</scope>
    <scope>INTERACTION WITH EIF3A; EIF3J; EIF3B; EIF3C AND EIF3I</scope>
    <scope>ASSOCIATION WITH THE 40S RIBOSOME</scope>
    <scope>DOMAIN</scope>
    <scope>MUTAGENESIS OF GLU-503</scope>
</reference>
<reference key="6">
    <citation type="journal article" date="2009" name="Dev. Biol.">
        <title>The Drosophila homologue of Arf-GAP GIT1, dGIT, is required for proper muscle morphogenesis and guidance during embryogenesis.</title>
        <authorList>
            <person name="Bahri S.M."/>
            <person name="Choy J.M."/>
            <person name="Manser E."/>
            <person name="Lim L."/>
            <person name="Yang X."/>
        </authorList>
    </citation>
    <scope>FUNCTION</scope>
    <scope>INTERACTION WITH GIT AND PAK</scope>
</reference>
<reference evidence="10" key="7">
    <citation type="journal article" date="2014" name="Biochimie">
        <title>A functional involvement of ABCE1, eukaryotic ribosome recycling factor, in nonstop mRNA decay in Drosophila melanogaster cells.</title>
        <authorList>
            <person name="Kashima I."/>
            <person name="Takahashi M."/>
            <person name="Hashimoto Y."/>
            <person name="Sakota E."/>
            <person name="Nakamura Y."/>
            <person name="Inada T."/>
        </authorList>
    </citation>
    <scope>FUNCTION</scope>
</reference>
<reference evidence="10" key="8">
    <citation type="journal article" date="2018" name="Cell Metab.">
        <title>Ubiquitination of ABCE1 by NOT4 in Response to Mitochondrial Damage Links Co-translational Quality Control to PINK1-Directed Mitophagy.</title>
        <authorList>
            <person name="Wu Z."/>
            <person name="Wang Y."/>
            <person name="Lim J."/>
            <person name="Liu B."/>
            <person name="Li Y."/>
            <person name="Vartak R."/>
            <person name="Stankiewicz T."/>
            <person name="Montgomery S."/>
            <person name="Lu B."/>
        </authorList>
    </citation>
    <scope>FUNCTION</scope>
    <scope>UBIQUITINATION</scope>
</reference>
<proteinExistence type="evidence at protein level"/>
<sequence length="611" mass="69298">MSRRKENEEVDKQTRIAIVSDDKCKPKRCRQECKKTCPVVRMGKLCIEVTPTSKIASLSEELCIGCGICVKKCPFEAITIINLPSNLEKHTTHRYSKNSFKLHRLPIPRPGEVLGLVGQNGIGKSTALKILAGKQKPNLGKYANPPDWTEILSYFRGSELQNYFTKILEDNLKALVKPQYVDQIPKAVRGAVGDLLDKKDERELQTKICEMLDLSHIRDREIAQLSGGELQRFAIAMVCIQNADIFMFDEPSSYLDVKQRLNAALTIRSLLHPTKFIIVVEHDLSVLDYLSDFICCLYGVPGCYGVVTMPFSVREGINIFLDGFVPTENMRFRTESLTFKVSESATEEEIKRMNHYVYPAMVKTLGKFELTVEKGHFSDSEILVLLGENGTGKTTFIRMLAGNLQPDGEVELPMLNISYKPQKISPKFQNHVRHLLHDKIRDAYVHPQFIADVMKPMKIEEIMDQEVQNLSGGELQRVALVLCLGKPADVYLIDEPSAYLDSEQRLVAAKVIKRYILHAKKTGFVVEHDFIMATYLADRVIVIEGQPSVKTTAFSPQSLLNGMNRFLELLGITFRRDPNNFRPRINKNNSVKDTEQKRSGQFFFLEDEACN</sequence>
<comment type="function">
    <text evidence="1 4 5 6 7 8">Plays a role in translation initiation and quality control of translation (PubMed:16291791, PubMed:17392269, PubMed:29861391). Together with pelo and HBS1, is required for 48S complex formation from 80S ribosomes and dissociation of vacant 80S ribosomes (PubMed:17392269). Stabilizes core components of eIF3 complex promoting their assembly into translation initiation-competent complexes (PubMed:17392269). Together with pelo and HBS1, recognizes stalled ribosomes and promotes dissociation of elongation complexes assembled on non-stop mRNAs; this triggers endonucleolytic cleavage of the mRNA, a mechanism to release non-functional ribosomes and to degrade damaged mRNAs as part of the No-Go Decay (NGD) pathway (PubMed:25128630). Plays a role in the regulation of mRNA turnover (By similarity). Plays a role in quality control of translation of mitochondrial outer membrane-localized mRNA (PubMed:29861391). As part of the Pink1-regulated signaling, ubiquitinated by Cnot4 upon mitochondria damage; this modification generates polyubiquitin signals that recruits autophagy receptors to the mitochondrial outer membrane to initiate mitophagy (PubMed:29861391). Required in the wing disk for cell division and growth as well as cell survival (PubMed:16291791). During muscle embryogenesis, required for the recruitment of Pak to muscle attachments in the embryo, hence may play a role in proper muscle morphogenesis and proper guidance and targeting of subsets of myotubes (PubMed:18996366).</text>
</comment>
<comment type="subunit">
    <text evidence="5 6">Interacts with components of eIF3 complex, namely eIF3a, eIF3j, eIF3b, eIF3c and eIF3i (PubMed:17392269). Associates with the 40S ribosome subunit in an ATP-dependent manner and independently from the presence of the eIF3 complex (PubMed:17392269). Forms a complex with Git and Pak; the interaction with Pak may be mediated by pix/dPIX (PubMed:18996366).</text>
</comment>
<comment type="subcellular location">
    <subcellularLocation>
        <location evidence="4">Cytoplasm</location>
    </subcellularLocation>
</comment>
<comment type="tissue specificity">
    <text evidence="4">Expressed in early and late larval imaginal disks (at protein level).</text>
</comment>
<comment type="domain">
    <text evidence="5">The ABC transporter 2 domain is necessary and sufficient for association to the 40S ribosome subunit.</text>
</comment>
<comment type="PTM">
    <text evidence="8">Ubiquitinated by Cnot4 (PubMed:29861391). Ubiquitination mediates the recruitment of autophagy receptors to the mitochondrial outer membrane and initiates mitophagy (PubMed:29861391).</text>
</comment>
<comment type="similarity">
    <text evidence="10">Belongs to the ABC transporter superfamily. ABCE family.</text>
</comment>
<name>ABCE1_DROME</name>
<evidence type="ECO:0000250" key="1">
    <source>
        <dbReference type="UniProtKB" id="P61221"/>
    </source>
</evidence>
<evidence type="ECO:0000255" key="2">
    <source>
        <dbReference type="PROSITE-ProRule" id="PRU00434"/>
    </source>
</evidence>
<evidence type="ECO:0000255" key="3">
    <source>
        <dbReference type="PROSITE-ProRule" id="PRU00711"/>
    </source>
</evidence>
<evidence type="ECO:0000269" key="4">
    <source>
    </source>
</evidence>
<evidence type="ECO:0000269" key="5">
    <source>
    </source>
</evidence>
<evidence type="ECO:0000269" key="6">
    <source>
    </source>
</evidence>
<evidence type="ECO:0000269" key="7">
    <source>
    </source>
</evidence>
<evidence type="ECO:0000269" key="8">
    <source>
    </source>
</evidence>
<evidence type="ECO:0000303" key="9">
    <source>
    </source>
</evidence>
<evidence type="ECO:0000305" key="10"/>
<evidence type="ECO:0000312" key="11">
    <source>
        <dbReference type="EMBL" id="AAL90382.1"/>
    </source>
</evidence>
<evidence type="ECO:0000312" key="12">
    <source>
        <dbReference type="FlyBase" id="FBgn0086706"/>
    </source>
</evidence>
<evidence type="ECO:0000312" key="13">
    <source>
        <dbReference type="Proteomes" id="UP000000803"/>
    </source>
</evidence>
<dbReference type="EMBL" id="AE014296">
    <property type="protein sequence ID" value="AAF50342.1"/>
    <property type="molecule type" value="Genomic_DNA"/>
</dbReference>
<dbReference type="EMBL" id="AE014296">
    <property type="protein sequence ID" value="AAN11979.1"/>
    <property type="molecule type" value="Genomic_DNA"/>
</dbReference>
<dbReference type="EMBL" id="AY089644">
    <property type="protein sequence ID" value="AAL90382.1"/>
    <property type="molecule type" value="mRNA"/>
</dbReference>
<dbReference type="RefSeq" id="NP_648272.1">
    <property type="nucleotide sequence ID" value="NM_140015.3"/>
</dbReference>
<dbReference type="RefSeq" id="NP_729435.1">
    <property type="nucleotide sequence ID" value="NM_168306.2"/>
</dbReference>
<dbReference type="SMR" id="Q9VSS1"/>
<dbReference type="FunCoup" id="Q9VSS1">
    <property type="interactions" value="2324"/>
</dbReference>
<dbReference type="IntAct" id="Q9VSS1">
    <property type="interactions" value="11"/>
</dbReference>
<dbReference type="STRING" id="7227.FBpp0076284"/>
<dbReference type="PaxDb" id="7227-FBpp0076284"/>
<dbReference type="DNASU" id="39027"/>
<dbReference type="EnsemblMetazoa" id="FBtr0076557">
    <property type="protein sequence ID" value="FBpp0076284"/>
    <property type="gene ID" value="FBgn0086706"/>
</dbReference>
<dbReference type="EnsemblMetazoa" id="FBtr0076558">
    <property type="protein sequence ID" value="FBpp0076285"/>
    <property type="gene ID" value="FBgn0086706"/>
</dbReference>
<dbReference type="GeneID" id="39027"/>
<dbReference type="KEGG" id="dme:Dmel_CG5651"/>
<dbReference type="UCSC" id="CG5651-RA">
    <property type="organism name" value="d. melanogaster"/>
</dbReference>
<dbReference type="AGR" id="FB:FBgn0086706"/>
<dbReference type="CTD" id="39027"/>
<dbReference type="FlyBase" id="FBgn0086706">
    <property type="gene designation" value="pix"/>
</dbReference>
<dbReference type="VEuPathDB" id="VectorBase:FBgn0086706"/>
<dbReference type="eggNOG" id="KOG0063">
    <property type="taxonomic scope" value="Eukaryota"/>
</dbReference>
<dbReference type="GeneTree" id="ENSGT00390000015089"/>
<dbReference type="HOGENOM" id="CLU_017344_4_1_1"/>
<dbReference type="InParanoid" id="Q9VSS1"/>
<dbReference type="OMA" id="MVCIQNG"/>
<dbReference type="OrthoDB" id="6593433at2759"/>
<dbReference type="PhylomeDB" id="Q9VSS1"/>
<dbReference type="BioGRID-ORCS" id="39027">
    <property type="hits" value="1 hit in 1 CRISPR screen"/>
</dbReference>
<dbReference type="ChiTaRS" id="pix">
    <property type="organism name" value="fly"/>
</dbReference>
<dbReference type="GenomeRNAi" id="39027"/>
<dbReference type="PRO" id="PR:Q9VSS1"/>
<dbReference type="Proteomes" id="UP000000803">
    <property type="component" value="Chromosome 3L"/>
</dbReference>
<dbReference type="Bgee" id="FBgn0086706">
    <property type="expression patterns" value="Expressed in adult enteroendocrine precursor cell in adult midgut (Drosophila) and 236 other cell types or tissues"/>
</dbReference>
<dbReference type="GO" id="GO:0005737">
    <property type="term" value="C:cytoplasm"/>
    <property type="evidence" value="ECO:0000314"/>
    <property type="project" value="FlyBase"/>
</dbReference>
<dbReference type="GO" id="GO:0005829">
    <property type="term" value="C:cytosol"/>
    <property type="evidence" value="ECO:0000314"/>
    <property type="project" value="FlyBase"/>
</dbReference>
<dbReference type="GO" id="GO:0051539">
    <property type="term" value="F:4 iron, 4 sulfur cluster binding"/>
    <property type="evidence" value="ECO:0007669"/>
    <property type="project" value="UniProtKB-KW"/>
</dbReference>
<dbReference type="GO" id="GO:0005524">
    <property type="term" value="F:ATP binding"/>
    <property type="evidence" value="ECO:0000315"/>
    <property type="project" value="FlyBase"/>
</dbReference>
<dbReference type="GO" id="GO:0016887">
    <property type="term" value="F:ATP hydrolysis activity"/>
    <property type="evidence" value="ECO:0007669"/>
    <property type="project" value="InterPro"/>
</dbReference>
<dbReference type="GO" id="GO:0005506">
    <property type="term" value="F:iron ion binding"/>
    <property type="evidence" value="ECO:0000318"/>
    <property type="project" value="GO_Central"/>
</dbReference>
<dbReference type="GO" id="GO:0043024">
    <property type="term" value="F:ribosomal small subunit binding"/>
    <property type="evidence" value="ECO:0000314"/>
    <property type="project" value="FlyBase"/>
</dbReference>
<dbReference type="GO" id="GO:0031369">
    <property type="term" value="F:translation initiation factor binding"/>
    <property type="evidence" value="ECO:0000353"/>
    <property type="project" value="UniProtKB"/>
</dbReference>
<dbReference type="GO" id="GO:0043524">
    <property type="term" value="P:negative regulation of neuron apoptotic process"/>
    <property type="evidence" value="ECO:0000315"/>
    <property type="project" value="FlyBase"/>
</dbReference>
<dbReference type="GO" id="GO:0070481">
    <property type="term" value="P:nuclear-transcribed mRNA catabolic process, non-stop decay"/>
    <property type="evidence" value="ECO:0000316"/>
    <property type="project" value="FlyBase"/>
</dbReference>
<dbReference type="GO" id="GO:0001558">
    <property type="term" value="P:regulation of cell growth"/>
    <property type="evidence" value="ECO:0000315"/>
    <property type="project" value="FlyBase"/>
</dbReference>
<dbReference type="GO" id="GO:0006417">
    <property type="term" value="P:regulation of translation"/>
    <property type="evidence" value="ECO:0007669"/>
    <property type="project" value="UniProtKB-KW"/>
</dbReference>
<dbReference type="GO" id="GO:0032790">
    <property type="term" value="P:ribosome disassembly"/>
    <property type="evidence" value="ECO:0000250"/>
    <property type="project" value="FlyBase"/>
</dbReference>
<dbReference type="GO" id="GO:0006412">
    <property type="term" value="P:translation"/>
    <property type="evidence" value="ECO:0000315"/>
    <property type="project" value="FlyBase"/>
</dbReference>
<dbReference type="GO" id="GO:0006413">
    <property type="term" value="P:translational initiation"/>
    <property type="evidence" value="ECO:0000315"/>
    <property type="project" value="FlyBase"/>
</dbReference>
<dbReference type="GO" id="GO:0006415">
    <property type="term" value="P:translational termination"/>
    <property type="evidence" value="ECO:0000318"/>
    <property type="project" value="GO_Central"/>
</dbReference>
<dbReference type="CDD" id="cd03236">
    <property type="entry name" value="ABC_RNaseL_inhibitor_domain1"/>
    <property type="match status" value="1"/>
</dbReference>
<dbReference type="FunFam" id="3.40.50.300:FF:000144">
    <property type="entry name" value="ATP-binding cassette sub-family E member 1"/>
    <property type="match status" value="1"/>
</dbReference>
<dbReference type="FunFam" id="3.40.50.300:FF:000152">
    <property type="entry name" value="ATP-binding cassette, sub-family E, member 1"/>
    <property type="match status" value="1"/>
</dbReference>
<dbReference type="Gene3D" id="3.40.50.300">
    <property type="entry name" value="P-loop containing nucleotide triphosphate hydrolases"/>
    <property type="match status" value="2"/>
</dbReference>
<dbReference type="InterPro" id="IPR017896">
    <property type="entry name" value="4Fe4S_Fe-S-bd"/>
</dbReference>
<dbReference type="InterPro" id="IPR017900">
    <property type="entry name" value="4Fe4S_Fe_S_CS"/>
</dbReference>
<dbReference type="InterPro" id="IPR003593">
    <property type="entry name" value="AAA+_ATPase"/>
</dbReference>
<dbReference type="InterPro" id="IPR003439">
    <property type="entry name" value="ABC_transporter-like_ATP-bd"/>
</dbReference>
<dbReference type="InterPro" id="IPR017871">
    <property type="entry name" value="ABC_transporter-like_CS"/>
</dbReference>
<dbReference type="InterPro" id="IPR027417">
    <property type="entry name" value="P-loop_NTPase"/>
</dbReference>
<dbReference type="InterPro" id="IPR013283">
    <property type="entry name" value="RLI1"/>
</dbReference>
<dbReference type="InterPro" id="IPR034348">
    <property type="entry name" value="RLI_dom_1"/>
</dbReference>
<dbReference type="InterPro" id="IPR007209">
    <property type="entry name" value="RNaseL-inhib-like_metal-bd_dom"/>
</dbReference>
<dbReference type="NCBIfam" id="NF009945">
    <property type="entry name" value="PRK13409.1"/>
    <property type="match status" value="1"/>
</dbReference>
<dbReference type="PANTHER" id="PTHR19248">
    <property type="entry name" value="ATP-BINDING TRANSPORT PROTEIN-RELATED"/>
    <property type="match status" value="1"/>
</dbReference>
<dbReference type="Pfam" id="PF00005">
    <property type="entry name" value="ABC_tran"/>
    <property type="match status" value="2"/>
</dbReference>
<dbReference type="Pfam" id="PF00037">
    <property type="entry name" value="Fer4"/>
    <property type="match status" value="1"/>
</dbReference>
<dbReference type="Pfam" id="PF04068">
    <property type="entry name" value="Fer4_RLI"/>
    <property type="match status" value="1"/>
</dbReference>
<dbReference type="PRINTS" id="PR01868">
    <property type="entry name" value="ABCEFAMILY"/>
</dbReference>
<dbReference type="SMART" id="SM00382">
    <property type="entry name" value="AAA"/>
    <property type="match status" value="2"/>
</dbReference>
<dbReference type="SUPFAM" id="SSF54862">
    <property type="entry name" value="4Fe-4S ferredoxins"/>
    <property type="match status" value="1"/>
</dbReference>
<dbReference type="SUPFAM" id="SSF52540">
    <property type="entry name" value="P-loop containing nucleoside triphosphate hydrolases"/>
    <property type="match status" value="2"/>
</dbReference>
<dbReference type="PROSITE" id="PS00198">
    <property type="entry name" value="4FE4S_FER_1"/>
    <property type="match status" value="1"/>
</dbReference>
<dbReference type="PROSITE" id="PS51379">
    <property type="entry name" value="4FE4S_FER_2"/>
    <property type="match status" value="2"/>
</dbReference>
<dbReference type="PROSITE" id="PS00211">
    <property type="entry name" value="ABC_TRANSPORTER_1"/>
    <property type="match status" value="1"/>
</dbReference>
<dbReference type="PROSITE" id="PS50893">
    <property type="entry name" value="ABC_TRANSPORTER_2"/>
    <property type="match status" value="2"/>
</dbReference>
<protein>
    <recommendedName>
        <fullName evidence="12">Protein Pixie</fullName>
    </recommendedName>
    <alternativeName>
        <fullName evidence="9">ATP-binding cassette sub-family E member 1</fullName>
    </alternativeName>
</protein>
<keyword id="KW-0004">4Fe-4S</keyword>
<keyword id="KW-0067">ATP-binding</keyword>
<keyword id="KW-0963">Cytoplasm</keyword>
<keyword id="KW-0408">Iron</keyword>
<keyword id="KW-0411">Iron-sulfur</keyword>
<keyword id="KW-0479">Metal-binding</keyword>
<keyword id="KW-0547">Nucleotide-binding</keyword>
<keyword id="KW-1185">Reference proteome</keyword>
<keyword id="KW-0810">Translation regulation</keyword>
<keyword id="KW-0832">Ubl conjugation</keyword>
<organism evidence="13">
    <name type="scientific">Drosophila melanogaster</name>
    <name type="common">Fruit fly</name>
    <dbReference type="NCBI Taxonomy" id="7227"/>
    <lineage>
        <taxon>Eukaryota</taxon>
        <taxon>Metazoa</taxon>
        <taxon>Ecdysozoa</taxon>
        <taxon>Arthropoda</taxon>
        <taxon>Hexapoda</taxon>
        <taxon>Insecta</taxon>
        <taxon>Pterygota</taxon>
        <taxon>Neoptera</taxon>
        <taxon>Endopterygota</taxon>
        <taxon>Diptera</taxon>
        <taxon>Brachycera</taxon>
        <taxon>Muscomorpha</taxon>
        <taxon>Ephydroidea</taxon>
        <taxon>Drosophilidae</taxon>
        <taxon>Drosophila</taxon>
        <taxon>Sophophora</taxon>
    </lineage>
</organism>
<feature type="chain" id="PRO_0000451862" description="Protein Pixie">
    <location>
        <begin position="1"/>
        <end position="611"/>
    </location>
</feature>
<feature type="domain" description="4Fe-4S ferredoxin-type 1" evidence="3">
    <location>
        <begin position="15"/>
        <end position="45"/>
    </location>
</feature>
<feature type="domain" description="4Fe-4S ferredoxin-type 2" evidence="3">
    <location>
        <begin position="54"/>
        <end position="83"/>
    </location>
</feature>
<feature type="domain" description="ABC transporter 1" evidence="2">
    <location>
        <begin position="78"/>
        <end position="323"/>
    </location>
</feature>
<feature type="domain" description="ABC transporter 2" evidence="2">
    <location>
        <begin position="350"/>
        <end position="570"/>
    </location>
</feature>
<feature type="binding site" evidence="2">
    <location>
        <begin position="118"/>
        <end position="125"/>
    </location>
    <ligand>
        <name>ATP</name>
        <dbReference type="ChEBI" id="CHEBI:30616"/>
    </ligand>
</feature>
<feature type="binding site" evidence="2">
    <location>
        <begin position="387"/>
        <end position="394"/>
    </location>
    <ligand>
        <name>ATP</name>
        <dbReference type="ChEBI" id="CHEBI:30616"/>
    </ligand>
</feature>
<feature type="mutagenesis site" description="Larval lethal. Viable but with reduced body and bristle size; when associated with L-146." evidence="4">
    <original>P</original>
    <variation>L</variation>
    <location>
        <position position="38"/>
    </location>
</feature>
<feature type="mutagenesis site" description="Embryonic lethal. Viable but with reduced body and bristle size; when associated with L-146." evidence="4">
    <original>A</original>
    <variation>T</variation>
    <location>
        <position position="77"/>
    </location>
</feature>
<feature type="mutagenesis site" description="Does not affect development. Viable but with reduced body and bristle size; when associated with L-38 or T-77." evidence="4">
    <original>P</original>
    <variation>L</variation>
    <location>
        <position position="146"/>
    </location>
</feature>
<feature type="mutagenesis site" description="Embryonic lethal." evidence="4">
    <original>Q</original>
    <variation>L</variation>
    <location>
        <position position="231"/>
    </location>
</feature>
<feature type="mutagenesis site" description="Constitutively associates with the 40S ribosomal subunit." evidence="5">
    <original>E</original>
    <variation>Q</variation>
    <location>
        <position position="503"/>
    </location>
</feature>